<sequence length="247" mass="29097">MEGVEEKKKVPAVPETLKKKRRNFAELKIKRLRKKFAQKMLRKARRKLIYEKAKHYHKEYRQMYRTEIRMARMARKAGNFYVPAEPKLAFVIRIRGINGVSPKVRKVLQLLRLRQIFNGTFVKLNKASINMLRIVEPYIAWGYPNLKSVNELIYKRGYGKINKKRIALTDNALIARSLGKYGIICMEDLIHEIYTVGKRFKEANNFLWPFKLSSPRGGMKKKTTHFVEGGDAGNREDQINRLIRRMN</sequence>
<keyword id="KW-0007">Acetylation</keyword>
<keyword id="KW-0963">Cytoplasm</keyword>
<keyword id="KW-0597">Phosphoprotein</keyword>
<keyword id="KW-1185">Reference proteome</keyword>
<keyword id="KW-0677">Repeat</keyword>
<keyword id="KW-0687">Ribonucleoprotein</keyword>
<keyword id="KW-0689">Ribosomal protein</keyword>
<keyword id="KW-0694">RNA-binding</keyword>
<name>RL7_PONAB</name>
<comment type="function">
    <text evidence="2">Component of the large ribosomal subunit. The ribosome is a large ribonucleoprotein complex responsible for the synthesis of proteins in the cell. Binds to G-rich structures in 28S rRNA and in mRNAs. Plays a regulatory role in the translation apparatus; inhibits cell-free translation of mRNAs.</text>
</comment>
<comment type="subunit">
    <text evidence="2">Component of the large ribosomal subunit. Homodimer. Interacts with DHX33.</text>
</comment>
<comment type="subcellular location">
    <subcellularLocation>
        <location evidence="2">Cytoplasm</location>
    </subcellularLocation>
</comment>
<comment type="similarity">
    <text evidence="3">Belongs to the universal ribosomal protein uL30 family.</text>
</comment>
<protein>
    <recommendedName>
        <fullName>Large ribosomal subunit protein uL30</fullName>
    </recommendedName>
    <alternativeName>
        <fullName>60S ribosomal protein L7</fullName>
    </alternativeName>
</protein>
<evidence type="ECO:0000250" key="1">
    <source>
        <dbReference type="UniProtKB" id="P14148"/>
    </source>
</evidence>
<evidence type="ECO:0000250" key="2">
    <source>
        <dbReference type="UniProtKB" id="P18124"/>
    </source>
</evidence>
<evidence type="ECO:0000305" key="3"/>
<proteinExistence type="evidence at transcript level"/>
<feature type="chain" id="PRO_0000265738" description="Large ribosomal subunit protein uL30">
    <location>
        <begin position="1"/>
        <end position="247"/>
    </location>
</feature>
<feature type="repeat" description="1">
    <location>
        <begin position="7"/>
        <end position="17"/>
    </location>
</feature>
<feature type="repeat" description="2">
    <location>
        <begin position="18"/>
        <end position="29"/>
    </location>
</feature>
<feature type="repeat" description="3">
    <location>
        <begin position="30"/>
        <end position="41"/>
    </location>
</feature>
<feature type="repeat" description="4">
    <location>
        <begin position="42"/>
        <end position="53"/>
    </location>
</feature>
<feature type="region of interest" description="4 X 12 AA tandem repeats">
    <location>
        <begin position="7"/>
        <end position="53"/>
    </location>
</feature>
<feature type="modified residue" description="N-acetylmethionine" evidence="2">
    <location>
        <position position="1"/>
    </location>
</feature>
<feature type="modified residue" description="Phosphothreonine" evidence="2">
    <location>
        <position position="16"/>
    </location>
</feature>
<feature type="modified residue" description="N6-acetyllysine" evidence="2">
    <location>
        <position position="123"/>
    </location>
</feature>
<feature type="modified residue" description="N6-succinyllysine" evidence="1">
    <location>
        <position position="126"/>
    </location>
</feature>
<feature type="modified residue" description="Phosphotyrosine" evidence="2">
    <location>
        <position position="138"/>
    </location>
</feature>
<dbReference type="EMBL" id="CR859318">
    <property type="protein sequence ID" value="CAH91496.1"/>
    <property type="molecule type" value="mRNA"/>
</dbReference>
<dbReference type="RefSeq" id="NP_001125880.1">
    <property type="nucleotide sequence ID" value="NM_001132408.2"/>
</dbReference>
<dbReference type="RefSeq" id="XP_009242140.1">
    <property type="nucleotide sequence ID" value="XM_009243865.1"/>
</dbReference>
<dbReference type="RefSeq" id="XP_024106333.1">
    <property type="nucleotide sequence ID" value="XM_024250565.2"/>
</dbReference>
<dbReference type="SMR" id="Q5R9R4"/>
<dbReference type="FunCoup" id="Q5R9R4">
    <property type="interactions" value="1908"/>
</dbReference>
<dbReference type="STRING" id="9601.ENSPPYP00000020944"/>
<dbReference type="Ensembl" id="ENSPPYT00000021782.3">
    <property type="protein sequence ID" value="ENSPPYP00000020944.2"/>
    <property type="gene ID" value="ENSPPYG00000018671.3"/>
</dbReference>
<dbReference type="GeneID" id="100172811"/>
<dbReference type="KEGG" id="pon:100172811"/>
<dbReference type="CTD" id="6129"/>
<dbReference type="eggNOG" id="KOG3184">
    <property type="taxonomic scope" value="Eukaryota"/>
</dbReference>
<dbReference type="GeneTree" id="ENSGT00950000182878"/>
<dbReference type="HOGENOM" id="CLU_055156_0_2_1"/>
<dbReference type="InParanoid" id="Q5R9R4"/>
<dbReference type="OMA" id="IVEPWIA"/>
<dbReference type="OrthoDB" id="9527569at2759"/>
<dbReference type="TreeFam" id="TF300740"/>
<dbReference type="Proteomes" id="UP000001595">
    <property type="component" value="Chromosome 8"/>
</dbReference>
<dbReference type="GO" id="GO:0022625">
    <property type="term" value="C:cytosolic large ribosomal subunit"/>
    <property type="evidence" value="ECO:0007669"/>
    <property type="project" value="Ensembl"/>
</dbReference>
<dbReference type="GO" id="GO:0005783">
    <property type="term" value="C:endoplasmic reticulum"/>
    <property type="evidence" value="ECO:0007669"/>
    <property type="project" value="Ensembl"/>
</dbReference>
<dbReference type="GO" id="GO:0005730">
    <property type="term" value="C:nucleolus"/>
    <property type="evidence" value="ECO:0007669"/>
    <property type="project" value="Ensembl"/>
</dbReference>
<dbReference type="GO" id="GO:0014069">
    <property type="term" value="C:postsynaptic density"/>
    <property type="evidence" value="ECO:0007669"/>
    <property type="project" value="Ensembl"/>
</dbReference>
<dbReference type="GO" id="GO:0003677">
    <property type="term" value="F:DNA binding"/>
    <property type="evidence" value="ECO:0007669"/>
    <property type="project" value="Ensembl"/>
</dbReference>
<dbReference type="GO" id="GO:0042802">
    <property type="term" value="F:identical protein binding"/>
    <property type="evidence" value="ECO:0007669"/>
    <property type="project" value="Ensembl"/>
</dbReference>
<dbReference type="GO" id="GO:0003729">
    <property type="term" value="F:mRNA binding"/>
    <property type="evidence" value="ECO:0007669"/>
    <property type="project" value="Ensembl"/>
</dbReference>
<dbReference type="GO" id="GO:0003735">
    <property type="term" value="F:structural constituent of ribosome"/>
    <property type="evidence" value="ECO:0007669"/>
    <property type="project" value="Ensembl"/>
</dbReference>
<dbReference type="GO" id="GO:0000463">
    <property type="term" value="P:maturation of LSU-rRNA from tricistronic rRNA transcript (SSU-rRNA, 5.8S rRNA, LSU-rRNA)"/>
    <property type="evidence" value="ECO:0007669"/>
    <property type="project" value="InterPro"/>
</dbReference>
<dbReference type="CDD" id="cd01657">
    <property type="entry name" value="Ribosomal_L7_archeal_euk"/>
    <property type="match status" value="1"/>
</dbReference>
<dbReference type="FunFam" id="3.30.1390.20:FF:000002">
    <property type="entry name" value="60S ribosomal protein L7"/>
    <property type="match status" value="1"/>
</dbReference>
<dbReference type="FunFam" id="3.30.1390.20:FF:000003">
    <property type="entry name" value="60S ribosomal protein L7"/>
    <property type="match status" value="1"/>
</dbReference>
<dbReference type="Gene3D" id="3.30.1390.20">
    <property type="entry name" value="Ribosomal protein L30, ferredoxin-like fold domain"/>
    <property type="match status" value="2"/>
</dbReference>
<dbReference type="InterPro" id="IPR036919">
    <property type="entry name" value="Ribo_uL30_ferredoxin-like_sf"/>
</dbReference>
<dbReference type="InterPro" id="IPR039699">
    <property type="entry name" value="Ribosomal_uL30"/>
</dbReference>
<dbReference type="InterPro" id="IPR018038">
    <property type="entry name" value="Ribosomal_uL30_CS"/>
</dbReference>
<dbReference type="InterPro" id="IPR005998">
    <property type="entry name" value="Ribosomal_uL30_euk"/>
</dbReference>
<dbReference type="InterPro" id="IPR035808">
    <property type="entry name" value="Ribosomal_uL30_euk_arc"/>
</dbReference>
<dbReference type="InterPro" id="IPR016082">
    <property type="entry name" value="Ribosomal_uL30_ferredoxin-like"/>
</dbReference>
<dbReference type="InterPro" id="IPR012988">
    <property type="entry name" value="Ribosomal_uL30_N_euk"/>
</dbReference>
<dbReference type="NCBIfam" id="TIGR01310">
    <property type="entry name" value="uL30_euk"/>
    <property type="match status" value="1"/>
</dbReference>
<dbReference type="PANTHER" id="PTHR11524">
    <property type="entry name" value="60S RIBOSOMAL PROTEIN L7"/>
    <property type="match status" value="1"/>
</dbReference>
<dbReference type="PANTHER" id="PTHR11524:SF12">
    <property type="entry name" value="LARGE RIBOSOMAL SUBUNIT PROTEIN UL30"/>
    <property type="match status" value="1"/>
</dbReference>
<dbReference type="Pfam" id="PF00327">
    <property type="entry name" value="Ribosomal_L30"/>
    <property type="match status" value="1"/>
</dbReference>
<dbReference type="Pfam" id="PF08079">
    <property type="entry name" value="Ribosomal_L30_N"/>
    <property type="match status" value="1"/>
</dbReference>
<dbReference type="SUPFAM" id="SSF55129">
    <property type="entry name" value="Ribosomal protein L30p/L7e"/>
    <property type="match status" value="1"/>
</dbReference>
<dbReference type="PROSITE" id="PS00634">
    <property type="entry name" value="RIBOSOMAL_L30"/>
    <property type="match status" value="1"/>
</dbReference>
<accession>Q5R9R4</accession>
<reference key="1">
    <citation type="submission" date="2004-11" db="EMBL/GenBank/DDBJ databases">
        <authorList>
            <consortium name="The German cDNA consortium"/>
        </authorList>
    </citation>
    <scope>NUCLEOTIDE SEQUENCE [LARGE SCALE MRNA]</scope>
    <source>
        <tissue>Kidney</tissue>
    </source>
</reference>
<organism>
    <name type="scientific">Pongo abelii</name>
    <name type="common">Sumatran orangutan</name>
    <name type="synonym">Pongo pygmaeus abelii</name>
    <dbReference type="NCBI Taxonomy" id="9601"/>
    <lineage>
        <taxon>Eukaryota</taxon>
        <taxon>Metazoa</taxon>
        <taxon>Chordata</taxon>
        <taxon>Craniata</taxon>
        <taxon>Vertebrata</taxon>
        <taxon>Euteleostomi</taxon>
        <taxon>Mammalia</taxon>
        <taxon>Eutheria</taxon>
        <taxon>Euarchontoglires</taxon>
        <taxon>Primates</taxon>
        <taxon>Haplorrhini</taxon>
        <taxon>Catarrhini</taxon>
        <taxon>Hominidae</taxon>
        <taxon>Pongo</taxon>
    </lineage>
</organism>
<gene>
    <name type="primary">RPL7</name>
</gene>